<organism>
    <name type="scientific">Zea mays</name>
    <name type="common">Maize</name>
    <dbReference type="NCBI Taxonomy" id="4577"/>
    <lineage>
        <taxon>Eukaryota</taxon>
        <taxon>Viridiplantae</taxon>
        <taxon>Streptophyta</taxon>
        <taxon>Embryophyta</taxon>
        <taxon>Tracheophyta</taxon>
        <taxon>Spermatophyta</taxon>
        <taxon>Magnoliopsida</taxon>
        <taxon>Liliopsida</taxon>
        <taxon>Poales</taxon>
        <taxon>Poaceae</taxon>
        <taxon>PACMAD clade</taxon>
        <taxon>Panicoideae</taxon>
        <taxon>Andropogonodae</taxon>
        <taxon>Andropogoneae</taxon>
        <taxon>Tripsacinae</taxon>
        <taxon>Zea</taxon>
    </lineage>
</organism>
<evidence type="ECO:0000250" key="1"/>
<evidence type="ECO:0000255" key="2">
    <source>
        <dbReference type="PROSITE-ProRule" id="PRU10106"/>
    </source>
</evidence>
<evidence type="ECO:0000305" key="3"/>
<dbReference type="EC" id="7.1.2.2"/>
<dbReference type="EMBL" id="U36436">
    <property type="protein sequence ID" value="AAA80346.1"/>
    <property type="molecule type" value="mRNA"/>
</dbReference>
<dbReference type="EMBL" id="X92373">
    <property type="protein sequence ID" value="CAA63117.1"/>
    <property type="molecule type" value="mRNA"/>
</dbReference>
<dbReference type="PIR" id="S65525">
    <property type="entry name" value="S65525"/>
</dbReference>
<dbReference type="SMR" id="P49087"/>
<dbReference type="STRING" id="4577.P49087"/>
<dbReference type="PaxDb" id="4577-GRMZM2G421857_P04"/>
<dbReference type="ProMEX" id="P49087"/>
<dbReference type="MaizeGDB" id="120463"/>
<dbReference type="eggNOG" id="KOG1352">
    <property type="taxonomic scope" value="Eukaryota"/>
</dbReference>
<dbReference type="InParanoid" id="P49087"/>
<dbReference type="Proteomes" id="UP000007305">
    <property type="component" value="Unplaced"/>
</dbReference>
<dbReference type="ExpressionAtlas" id="P49087">
    <property type="expression patterns" value="baseline and differential"/>
</dbReference>
<dbReference type="GO" id="GO:0000325">
    <property type="term" value="C:plant-type vacuole"/>
    <property type="evidence" value="ECO:0000318"/>
    <property type="project" value="GO_Central"/>
</dbReference>
<dbReference type="GO" id="GO:0033180">
    <property type="term" value="C:proton-transporting V-type ATPase, V1 domain"/>
    <property type="evidence" value="ECO:0007669"/>
    <property type="project" value="InterPro"/>
</dbReference>
<dbReference type="GO" id="GO:0005524">
    <property type="term" value="F:ATP binding"/>
    <property type="evidence" value="ECO:0007669"/>
    <property type="project" value="UniProtKB-KW"/>
</dbReference>
<dbReference type="GO" id="GO:0016887">
    <property type="term" value="F:ATP hydrolysis activity"/>
    <property type="evidence" value="ECO:0007669"/>
    <property type="project" value="InterPro"/>
</dbReference>
<dbReference type="GO" id="GO:0046961">
    <property type="term" value="F:proton-transporting ATPase activity, rotational mechanism"/>
    <property type="evidence" value="ECO:0000318"/>
    <property type="project" value="GO_Central"/>
</dbReference>
<dbReference type="GO" id="GO:0046034">
    <property type="term" value="P:ATP metabolic process"/>
    <property type="evidence" value="ECO:0007669"/>
    <property type="project" value="InterPro"/>
</dbReference>
<dbReference type="GO" id="GO:1902600">
    <property type="term" value="P:proton transmembrane transport"/>
    <property type="evidence" value="ECO:0000318"/>
    <property type="project" value="GO_Central"/>
</dbReference>
<dbReference type="CDD" id="cd18111">
    <property type="entry name" value="ATP-synt_V_A-type_alpha_C"/>
    <property type="match status" value="1"/>
</dbReference>
<dbReference type="CDD" id="cd01134">
    <property type="entry name" value="V_A-ATPase_A"/>
    <property type="match status" value="1"/>
</dbReference>
<dbReference type="FunFam" id="1.10.1140.10:FF:000002">
    <property type="entry name" value="V-type proton ATPase catalytic subunit A"/>
    <property type="match status" value="1"/>
</dbReference>
<dbReference type="FunFam" id="2.40.50.100:FF:000008">
    <property type="entry name" value="V-type proton ATPase catalytic subunit A"/>
    <property type="match status" value="1"/>
</dbReference>
<dbReference type="FunFam" id="3.40.50.300:FF:000052">
    <property type="entry name" value="V-type proton ATPase catalytic subunit A"/>
    <property type="match status" value="1"/>
</dbReference>
<dbReference type="Gene3D" id="2.30.30.650">
    <property type="match status" value="1"/>
</dbReference>
<dbReference type="Gene3D" id="2.40.50.100">
    <property type="match status" value="1"/>
</dbReference>
<dbReference type="Gene3D" id="1.10.1140.10">
    <property type="entry name" value="Bovine Mitochondrial F1-atpase, Atp Synthase Beta Chain, Chain D, domain 3"/>
    <property type="match status" value="1"/>
</dbReference>
<dbReference type="Gene3D" id="3.40.50.300">
    <property type="entry name" value="P-loop containing nucleotide triphosphate hydrolases"/>
    <property type="match status" value="1"/>
</dbReference>
<dbReference type="InterPro" id="IPR055190">
    <property type="entry name" value="ATP-synt_VA_C"/>
</dbReference>
<dbReference type="InterPro" id="IPR031686">
    <property type="entry name" value="ATP-synth_a_Xtn"/>
</dbReference>
<dbReference type="InterPro" id="IPR020003">
    <property type="entry name" value="ATPase_a/bsu_AS"/>
</dbReference>
<dbReference type="InterPro" id="IPR000194">
    <property type="entry name" value="ATPase_F1/V1/A1_a/bsu_nucl-bd"/>
</dbReference>
<dbReference type="InterPro" id="IPR024034">
    <property type="entry name" value="ATPase_F1/V1_b/a_C"/>
</dbReference>
<dbReference type="InterPro" id="IPR005725">
    <property type="entry name" value="ATPase_V1-cplx_asu"/>
</dbReference>
<dbReference type="InterPro" id="IPR027417">
    <property type="entry name" value="P-loop_NTPase"/>
</dbReference>
<dbReference type="InterPro" id="IPR022878">
    <property type="entry name" value="V-ATPase_asu"/>
</dbReference>
<dbReference type="NCBIfam" id="NF003220">
    <property type="entry name" value="PRK04192.1"/>
    <property type="match status" value="1"/>
</dbReference>
<dbReference type="NCBIfam" id="TIGR01042">
    <property type="entry name" value="V-ATPase_V1_A"/>
    <property type="match status" value="1"/>
</dbReference>
<dbReference type="PANTHER" id="PTHR43607">
    <property type="entry name" value="V-TYPE PROTON ATPASE CATALYTIC SUBUNIT A"/>
    <property type="match status" value="1"/>
</dbReference>
<dbReference type="PANTHER" id="PTHR43607:SF6">
    <property type="entry name" value="V-TYPE PROTON ATPASE CATALYTIC SUBUNIT A"/>
    <property type="match status" value="1"/>
</dbReference>
<dbReference type="Pfam" id="PF00006">
    <property type="entry name" value="ATP-synt_ab"/>
    <property type="match status" value="1"/>
</dbReference>
<dbReference type="Pfam" id="PF16886">
    <property type="entry name" value="ATP-synt_ab_Xtn"/>
    <property type="match status" value="1"/>
</dbReference>
<dbReference type="Pfam" id="PF22919">
    <property type="entry name" value="ATP-synt_VA_C"/>
    <property type="match status" value="1"/>
</dbReference>
<dbReference type="SUPFAM" id="SSF47917">
    <property type="entry name" value="C-terminal domain of alpha and beta subunits of F1 ATP synthase"/>
    <property type="match status" value="1"/>
</dbReference>
<dbReference type="SUPFAM" id="SSF52540">
    <property type="entry name" value="P-loop containing nucleoside triphosphate hydrolases"/>
    <property type="match status" value="1"/>
</dbReference>
<dbReference type="PROSITE" id="PS00152">
    <property type="entry name" value="ATPASE_ALPHA_BETA"/>
    <property type="match status" value="1"/>
</dbReference>
<accession>P49087</accession>
<accession>Q41775</accession>
<name>VATA_MAIZE</name>
<sequence length="561" mass="61952">ARATIQVYEETAGLMVNDPVLRTRKPLSVELGPGILGNIFDGIQRPLKTIAIKSGDVYIPRGVSVPALDKDVLWEFQPTKLGVGDVITGGDLYATVFENTLMQHHVALPPGSMGKISYIAPAGQYNLQDTVLELEFQGIKKKFTMLQTWPVRSPRPVASKLAADTPLLTGQRVLDALFPSVLGGTCAIPGAFGCGKTVISQALSKYSNSEAVVYVGCGERGNEMAEVLMDFPQLTMTLPDGREESVMKRTTLVANTSNMPVAAREASIYTGITIAEYFRDMGYNVSMMADSTSRWAEALREISGRLAEMPADSGYPAYLAARLASFYERAGKVKCLGSPDRNGSVTIVGAVSPPGGDFSDPVTSATLSIVQVFWGLDKKLAQRKHFPSVNWLISYSKYSKALESFYEKFDPDFIDIRTKAREVLQREDDLNEIVQLVGKDALAESDKITLETAKLLREDYLAQNAFTPYDKFCPFYKSVWMMRNIIHFNTLANQAVERAAGTDGHKITYSVIKHRLGDLFYRLVSQKFEDPAEGEEALVGKFKKLYDDLTTGFRNLEDEAR</sequence>
<feature type="chain" id="PRO_0000144582" description="V-type proton ATPase catalytic subunit A">
    <location>
        <begin position="1" status="less than"/>
        <end position="561"/>
    </location>
</feature>
<feature type="binding site" evidence="1">
    <location>
        <begin position="190"/>
        <end position="197"/>
    </location>
    <ligand>
        <name>ATP</name>
        <dbReference type="ChEBI" id="CHEBI:30616"/>
    </ligand>
</feature>
<feature type="sequence conflict" description="In Ref. 2; CAA63117." evidence="3" ref="2">
    <original>A</original>
    <variation>C</variation>
    <location>
        <position position="187"/>
    </location>
</feature>
<feature type="sequence conflict" description="In Ref. 2; CAA63117." evidence="3" ref="2">
    <original>TLP</original>
    <variation>QFA</variation>
    <location>
        <begin position="237"/>
        <end position="239"/>
    </location>
</feature>
<feature type="sequence conflict" description="In Ref. 2; CAA63117." evidence="3" ref="2">
    <original>E</original>
    <variation>R</variation>
    <location>
        <position position="243"/>
    </location>
</feature>
<feature type="non-terminal residue">
    <location>
        <position position="1"/>
    </location>
</feature>
<proteinExistence type="evidence at transcript level"/>
<protein>
    <recommendedName>
        <fullName>V-type proton ATPase catalytic subunit A</fullName>
        <shortName>V-ATPase subunit A</shortName>
        <ecNumber>7.1.2.2</ecNumber>
    </recommendedName>
    <alternativeName>
        <fullName>V-ATPase 69 kDa subunit</fullName>
    </alternativeName>
    <alternativeName>
        <fullName>Vacuolar proton pump subunit alpha</fullName>
    </alternativeName>
</protein>
<reference key="1">
    <citation type="submission" date="1995-09" db="EMBL/GenBank/DDBJ databases">
        <authorList>
            <person name="Perotti E."/>
            <person name="Gavin O."/>
            <person name="Chanson A."/>
            <person name="Fraichard A."/>
        </authorList>
    </citation>
    <scope>NUCLEOTIDE SEQUENCE [MRNA]</scope>
</reference>
<reference key="2">
    <citation type="journal article" date="1996" name="FEBS Lett.">
        <title>Down-regulation of plant V-type H+ -ATPase genes after light-induced inhibition of growth.</title>
        <authorList>
            <person name="Viereck R."/>
            <person name="Kirsch M."/>
            <person name="Loew R."/>
            <person name="Rausch T."/>
        </authorList>
    </citation>
    <scope>NUCLEOTIDE SEQUENCE [MRNA] OF 47-258</scope>
    <source>
        <strain>cv. Lixis</strain>
        <tissue>Coleoptile</tissue>
    </source>
</reference>
<keyword id="KW-0067">ATP-binding</keyword>
<keyword id="KW-0375">Hydrogen ion transport</keyword>
<keyword id="KW-0406">Ion transport</keyword>
<keyword id="KW-0547">Nucleotide-binding</keyword>
<keyword id="KW-1185">Reference proteome</keyword>
<keyword id="KW-1278">Translocase</keyword>
<keyword id="KW-0813">Transport</keyword>
<comment type="function">
    <text>Catalytic subunit of the peripheral V1 complex of vacuolar ATPase. V-ATPase vacuolar ATPase is responsible for acidifying a variety of intracellular compartments in eukaryotic cells.</text>
</comment>
<comment type="catalytic activity">
    <reaction evidence="2">
        <text>ATP + H2O + 4 H(+)(in) = ADP + phosphate + 5 H(+)(out)</text>
        <dbReference type="Rhea" id="RHEA:57720"/>
        <dbReference type="ChEBI" id="CHEBI:15377"/>
        <dbReference type="ChEBI" id="CHEBI:15378"/>
        <dbReference type="ChEBI" id="CHEBI:30616"/>
        <dbReference type="ChEBI" id="CHEBI:43474"/>
        <dbReference type="ChEBI" id="CHEBI:456216"/>
        <dbReference type="EC" id="7.1.2.2"/>
    </reaction>
</comment>
<comment type="subunit">
    <text>V-ATPase is a heteromultimeric enzyme composed of a peripheral catalytic V1 complex (main components: subunits A, B, C, D, E, and F) attached to an integral membrane V0 proton pore complex (main component: the proteolipid protein).</text>
</comment>
<comment type="tissue specificity">
    <text>High expression in the mesocotyl tip of etiolated seedlings compared to the base.</text>
</comment>
<comment type="developmental stage">
    <text>Expression is strongly linked to extension growth.</text>
</comment>
<comment type="similarity">
    <text evidence="3">Belongs to the ATPase alpha/beta chains family.</text>
</comment>